<proteinExistence type="inferred from homology"/>
<feature type="chain" id="PRO_1000204127" description="UvrABC system protein C">
    <location>
        <begin position="1"/>
        <end position="639"/>
    </location>
</feature>
<feature type="domain" description="GIY-YIG" evidence="1">
    <location>
        <begin position="20"/>
        <end position="97"/>
    </location>
</feature>
<feature type="domain" description="UVR" evidence="1">
    <location>
        <begin position="207"/>
        <end position="242"/>
    </location>
</feature>
<accession>C4K1I8</accession>
<gene>
    <name evidence="1" type="primary">uvrC</name>
    <name type="ordered locus">RPR_03395</name>
</gene>
<organism>
    <name type="scientific">Rickettsia peacockii (strain Rustic)</name>
    <dbReference type="NCBI Taxonomy" id="562019"/>
    <lineage>
        <taxon>Bacteria</taxon>
        <taxon>Pseudomonadati</taxon>
        <taxon>Pseudomonadota</taxon>
        <taxon>Alphaproteobacteria</taxon>
        <taxon>Rickettsiales</taxon>
        <taxon>Rickettsiaceae</taxon>
        <taxon>Rickettsieae</taxon>
        <taxon>Rickettsia</taxon>
        <taxon>spotted fever group</taxon>
    </lineage>
</organism>
<sequence>MTLEITGSELIKSKLIDAPERSGVYRMFDVNKQVLYVGKAKNLKKRLTNYIKSNLDNKTLRMIANTCFLEYSITNSEVEALLLEAQLIKKFQPKFNILLKDCKSFPFIKLRLDHDFPQLLKYRGKTLSDGKFFGPFASSAEVNTTLTELQKIFKLRSCTDNYFNSRTRPCLQYEIKRCYAPCVGKINKEDYRDLVTQVKDFLQGRTKELQENLSRKMEELSSQMRFEEAAEIRDRIKALSYVQLKAGVSDVVKDADIIAIVEKNGHYCVEVFLYRAGQACGNIPYFPTSTENSTKEEVLEYFLLQFYQKQHVPAAIIINHEINDKENVIEAIKKINNILQLNITVPNKGGKAKLVQNAETNALFSLEQYLKKFAKNQEIMFEIKELFGLSEIPERIEIYDNSHIQGKFAVGVMVVAGKVGFDKKEYRVFNVHAPSLVCHSRESGDPKRLMDSCFRGNGIKNCGGDIKGDDYEMLRQVLTRRLTRLRQEPHKLPSLMIIDGGKGHLGVVKEVMDKFEMNIPFVCMSKGVDRNTGFEQFHVIGKEVFTLDKNLPVMKYLQILRDEAHNFAIKNHRLGRSRAIKISRLDDIEGVGETRKKALLHYFGSYKAVCDATIYELAKVNGINKLLAEMIFNVLHRKN</sequence>
<reference key="1">
    <citation type="journal article" date="2009" name="PLoS ONE">
        <title>Genome sequence of the endosymbiont Rickettsia peacockii and comparison with virulent Rickettsia rickettsii: identification of virulence factors.</title>
        <authorList>
            <person name="Felsheim R.F."/>
            <person name="Kurtti T.J."/>
            <person name="Munderloh U.G."/>
        </authorList>
    </citation>
    <scope>NUCLEOTIDE SEQUENCE [LARGE SCALE GENOMIC DNA]</scope>
    <source>
        <strain>Rustic</strain>
    </source>
</reference>
<keyword id="KW-0963">Cytoplasm</keyword>
<keyword id="KW-0227">DNA damage</keyword>
<keyword id="KW-0228">DNA excision</keyword>
<keyword id="KW-0234">DNA repair</keyword>
<keyword id="KW-0267">Excision nuclease</keyword>
<keyword id="KW-0742">SOS response</keyword>
<protein>
    <recommendedName>
        <fullName evidence="1">UvrABC system protein C</fullName>
        <shortName evidence="1">Protein UvrC</shortName>
    </recommendedName>
    <alternativeName>
        <fullName evidence="1">Excinuclease ABC subunit C</fullName>
    </alternativeName>
</protein>
<dbReference type="EMBL" id="CP001227">
    <property type="protein sequence ID" value="ACR47439.1"/>
    <property type="molecule type" value="Genomic_DNA"/>
</dbReference>
<dbReference type="RefSeq" id="WP_012736680.1">
    <property type="nucleotide sequence ID" value="NC_012730.1"/>
</dbReference>
<dbReference type="SMR" id="C4K1I8"/>
<dbReference type="KEGG" id="rpk:RPR_03395"/>
<dbReference type="HOGENOM" id="CLU_014841_3_2_5"/>
<dbReference type="Proteomes" id="UP000005015">
    <property type="component" value="Chromosome"/>
</dbReference>
<dbReference type="GO" id="GO:0005737">
    <property type="term" value="C:cytoplasm"/>
    <property type="evidence" value="ECO:0007669"/>
    <property type="project" value="UniProtKB-SubCell"/>
</dbReference>
<dbReference type="GO" id="GO:0009380">
    <property type="term" value="C:excinuclease repair complex"/>
    <property type="evidence" value="ECO:0007669"/>
    <property type="project" value="InterPro"/>
</dbReference>
<dbReference type="GO" id="GO:0003677">
    <property type="term" value="F:DNA binding"/>
    <property type="evidence" value="ECO:0007669"/>
    <property type="project" value="UniProtKB-UniRule"/>
</dbReference>
<dbReference type="GO" id="GO:0009381">
    <property type="term" value="F:excinuclease ABC activity"/>
    <property type="evidence" value="ECO:0007669"/>
    <property type="project" value="UniProtKB-UniRule"/>
</dbReference>
<dbReference type="GO" id="GO:0006289">
    <property type="term" value="P:nucleotide-excision repair"/>
    <property type="evidence" value="ECO:0007669"/>
    <property type="project" value="UniProtKB-UniRule"/>
</dbReference>
<dbReference type="GO" id="GO:0009432">
    <property type="term" value="P:SOS response"/>
    <property type="evidence" value="ECO:0007669"/>
    <property type="project" value="UniProtKB-UniRule"/>
</dbReference>
<dbReference type="CDD" id="cd10434">
    <property type="entry name" value="GIY-YIG_UvrC_Cho"/>
    <property type="match status" value="1"/>
</dbReference>
<dbReference type="FunFam" id="3.40.1440.10:FF:000001">
    <property type="entry name" value="UvrABC system protein C"/>
    <property type="match status" value="1"/>
</dbReference>
<dbReference type="Gene3D" id="1.10.150.20">
    <property type="entry name" value="5' to 3' exonuclease, C-terminal subdomain"/>
    <property type="match status" value="1"/>
</dbReference>
<dbReference type="Gene3D" id="3.40.1440.10">
    <property type="entry name" value="GIY-YIG endonuclease"/>
    <property type="match status" value="1"/>
</dbReference>
<dbReference type="Gene3D" id="4.10.860.10">
    <property type="entry name" value="UVR domain"/>
    <property type="match status" value="1"/>
</dbReference>
<dbReference type="Gene3D" id="3.30.420.340">
    <property type="entry name" value="UvrC, RNAse H endonuclease domain"/>
    <property type="match status" value="1"/>
</dbReference>
<dbReference type="HAMAP" id="MF_00203">
    <property type="entry name" value="UvrC"/>
    <property type="match status" value="1"/>
</dbReference>
<dbReference type="InterPro" id="IPR000305">
    <property type="entry name" value="GIY-YIG_endonuc"/>
</dbReference>
<dbReference type="InterPro" id="IPR035901">
    <property type="entry name" value="GIY-YIG_endonuc_sf"/>
</dbReference>
<dbReference type="InterPro" id="IPR047296">
    <property type="entry name" value="GIY-YIG_UvrC_Cho"/>
</dbReference>
<dbReference type="InterPro" id="IPR010994">
    <property type="entry name" value="RuvA_2-like"/>
</dbReference>
<dbReference type="InterPro" id="IPR001943">
    <property type="entry name" value="UVR_dom"/>
</dbReference>
<dbReference type="InterPro" id="IPR036876">
    <property type="entry name" value="UVR_dom_sf"/>
</dbReference>
<dbReference type="InterPro" id="IPR050066">
    <property type="entry name" value="UvrABC_protein_C"/>
</dbReference>
<dbReference type="InterPro" id="IPR004791">
    <property type="entry name" value="UvrC"/>
</dbReference>
<dbReference type="InterPro" id="IPR001162">
    <property type="entry name" value="UvrC_RNase_H_dom"/>
</dbReference>
<dbReference type="InterPro" id="IPR038476">
    <property type="entry name" value="UvrC_RNase_H_dom_sf"/>
</dbReference>
<dbReference type="NCBIfam" id="TIGR00194">
    <property type="entry name" value="uvrC"/>
    <property type="match status" value="1"/>
</dbReference>
<dbReference type="PANTHER" id="PTHR30562:SF1">
    <property type="entry name" value="UVRABC SYSTEM PROTEIN C"/>
    <property type="match status" value="1"/>
</dbReference>
<dbReference type="PANTHER" id="PTHR30562">
    <property type="entry name" value="UVRC/OXIDOREDUCTASE"/>
    <property type="match status" value="1"/>
</dbReference>
<dbReference type="Pfam" id="PF01541">
    <property type="entry name" value="GIY-YIG"/>
    <property type="match status" value="1"/>
</dbReference>
<dbReference type="Pfam" id="PF14520">
    <property type="entry name" value="HHH_5"/>
    <property type="match status" value="1"/>
</dbReference>
<dbReference type="Pfam" id="PF02151">
    <property type="entry name" value="UVR"/>
    <property type="match status" value="1"/>
</dbReference>
<dbReference type="Pfam" id="PF22920">
    <property type="entry name" value="UvrC_RNaseH"/>
    <property type="match status" value="1"/>
</dbReference>
<dbReference type="Pfam" id="PF08459">
    <property type="entry name" value="UvrC_RNaseH_dom"/>
    <property type="match status" value="2"/>
</dbReference>
<dbReference type="SMART" id="SM00465">
    <property type="entry name" value="GIYc"/>
    <property type="match status" value="1"/>
</dbReference>
<dbReference type="SUPFAM" id="SSF46600">
    <property type="entry name" value="C-terminal UvrC-binding domain of UvrB"/>
    <property type="match status" value="1"/>
</dbReference>
<dbReference type="SUPFAM" id="SSF82771">
    <property type="entry name" value="GIY-YIG endonuclease"/>
    <property type="match status" value="1"/>
</dbReference>
<dbReference type="SUPFAM" id="SSF47781">
    <property type="entry name" value="RuvA domain 2-like"/>
    <property type="match status" value="1"/>
</dbReference>
<dbReference type="PROSITE" id="PS50164">
    <property type="entry name" value="GIY_YIG"/>
    <property type="match status" value="1"/>
</dbReference>
<dbReference type="PROSITE" id="PS50151">
    <property type="entry name" value="UVR"/>
    <property type="match status" value="1"/>
</dbReference>
<dbReference type="PROSITE" id="PS50165">
    <property type="entry name" value="UVRC"/>
    <property type="match status" value="1"/>
</dbReference>
<name>UVRC_RICPU</name>
<comment type="function">
    <text evidence="1">The UvrABC repair system catalyzes the recognition and processing of DNA lesions. UvrC both incises the 5' and 3' sides of the lesion. The N-terminal half is responsible for the 3' incision and the C-terminal half is responsible for the 5' incision.</text>
</comment>
<comment type="subunit">
    <text evidence="1">Interacts with UvrB in an incision complex.</text>
</comment>
<comment type="subcellular location">
    <subcellularLocation>
        <location evidence="1">Cytoplasm</location>
    </subcellularLocation>
</comment>
<comment type="similarity">
    <text evidence="1">Belongs to the UvrC family.</text>
</comment>
<evidence type="ECO:0000255" key="1">
    <source>
        <dbReference type="HAMAP-Rule" id="MF_00203"/>
    </source>
</evidence>